<reference key="1">
    <citation type="submission" date="2002-12" db="EMBL/GenBank/DDBJ databases">
        <title>Complete genome sequence of Vibrio vulnificus CMCP6.</title>
        <authorList>
            <person name="Rhee J.H."/>
            <person name="Kim S.Y."/>
            <person name="Chung S.S."/>
            <person name="Kim J.J."/>
            <person name="Moon Y.H."/>
            <person name="Jeong H."/>
            <person name="Choy H.E."/>
        </authorList>
    </citation>
    <scope>NUCLEOTIDE SEQUENCE [LARGE SCALE GENOMIC DNA]</scope>
    <source>
        <strain>CMCP6</strain>
    </source>
</reference>
<sequence length="378" mass="43100">MKLKFDLKKKNGNARRGQLTFERGTVQTPAFMPVGTYGTVKGMTPEEVKETGAEILLGNTFHLWLRPGQEVMKMHGDLHDFMNWQGPILTDSGGFQVFSLGDIRKITEEGVHFRNPVNGDKIFMDAEKSMEIQKDLGSDIVMIFDECTPYPATHAEAKKSMEMSLRWAQRSRDHFDKLENPNNLFGIVQGGVYEDLRDVSVKGLTEIGFDGYAVGGLAVGEPKEDMHRVLEHTCPQLPEDKPRYLMGVGKPEDLVEGVRRGIDMFDCVMPTRNARNGHLFVTGGVIKIRNATHKTDTTPLDPHCDCYTCKNYSKSYLHHLDRCNEILGARLNTIHNLRYYQRLMESIRKAIDEDRFEQFVEEFYARRNREVPPLGKQA</sequence>
<protein>
    <recommendedName>
        <fullName evidence="1">Queuine tRNA-ribosyltransferase</fullName>
        <ecNumber evidence="1">2.4.2.29</ecNumber>
    </recommendedName>
    <alternativeName>
        <fullName evidence="1">Guanine insertion enzyme</fullName>
    </alternativeName>
    <alternativeName>
        <fullName evidence="1">tRNA-guanine transglycosylase</fullName>
    </alternativeName>
</protein>
<dbReference type="EC" id="2.4.2.29" evidence="1"/>
<dbReference type="EMBL" id="AE016795">
    <property type="protein sequence ID" value="AAO08968.1"/>
    <property type="status" value="ALT_INIT"/>
    <property type="molecule type" value="Genomic_DNA"/>
</dbReference>
<dbReference type="RefSeq" id="WP_013572355.1">
    <property type="nucleotide sequence ID" value="NC_004459.3"/>
</dbReference>
<dbReference type="SMR" id="Q8DEY0"/>
<dbReference type="GeneID" id="93894750"/>
<dbReference type="KEGG" id="vvu:VV1_0445"/>
<dbReference type="HOGENOM" id="CLU_022060_0_1_6"/>
<dbReference type="UniPathway" id="UPA00392"/>
<dbReference type="Proteomes" id="UP000002275">
    <property type="component" value="Chromosome 1"/>
</dbReference>
<dbReference type="GO" id="GO:0005829">
    <property type="term" value="C:cytosol"/>
    <property type="evidence" value="ECO:0007669"/>
    <property type="project" value="TreeGrafter"/>
</dbReference>
<dbReference type="GO" id="GO:0046872">
    <property type="term" value="F:metal ion binding"/>
    <property type="evidence" value="ECO:0007669"/>
    <property type="project" value="UniProtKB-KW"/>
</dbReference>
<dbReference type="GO" id="GO:0008479">
    <property type="term" value="F:tRNA-guanosine(34) queuine transglycosylase activity"/>
    <property type="evidence" value="ECO:0007669"/>
    <property type="project" value="UniProtKB-UniRule"/>
</dbReference>
<dbReference type="GO" id="GO:0008616">
    <property type="term" value="P:queuosine biosynthetic process"/>
    <property type="evidence" value="ECO:0007669"/>
    <property type="project" value="UniProtKB-UniRule"/>
</dbReference>
<dbReference type="GO" id="GO:0002099">
    <property type="term" value="P:tRNA wobble guanine modification"/>
    <property type="evidence" value="ECO:0007669"/>
    <property type="project" value="TreeGrafter"/>
</dbReference>
<dbReference type="GO" id="GO:0101030">
    <property type="term" value="P:tRNA-guanine transglycosylation"/>
    <property type="evidence" value="ECO:0007669"/>
    <property type="project" value="InterPro"/>
</dbReference>
<dbReference type="FunFam" id="3.20.20.105:FF:000001">
    <property type="entry name" value="Queuine tRNA-ribosyltransferase"/>
    <property type="match status" value="1"/>
</dbReference>
<dbReference type="Gene3D" id="3.20.20.105">
    <property type="entry name" value="Queuine tRNA-ribosyltransferase-like"/>
    <property type="match status" value="1"/>
</dbReference>
<dbReference type="HAMAP" id="MF_00168">
    <property type="entry name" value="Q_tRNA_Tgt"/>
    <property type="match status" value="1"/>
</dbReference>
<dbReference type="InterPro" id="IPR050076">
    <property type="entry name" value="ArchSynthase1/Queuine_TRR"/>
</dbReference>
<dbReference type="InterPro" id="IPR004803">
    <property type="entry name" value="TGT"/>
</dbReference>
<dbReference type="InterPro" id="IPR036511">
    <property type="entry name" value="TGT-like_sf"/>
</dbReference>
<dbReference type="InterPro" id="IPR002616">
    <property type="entry name" value="tRNA_ribo_trans-like"/>
</dbReference>
<dbReference type="NCBIfam" id="TIGR00430">
    <property type="entry name" value="Q_tRNA_tgt"/>
    <property type="match status" value="1"/>
</dbReference>
<dbReference type="NCBIfam" id="TIGR00449">
    <property type="entry name" value="tgt_general"/>
    <property type="match status" value="1"/>
</dbReference>
<dbReference type="PANTHER" id="PTHR46499">
    <property type="entry name" value="QUEUINE TRNA-RIBOSYLTRANSFERASE"/>
    <property type="match status" value="1"/>
</dbReference>
<dbReference type="PANTHER" id="PTHR46499:SF1">
    <property type="entry name" value="QUEUINE TRNA-RIBOSYLTRANSFERASE"/>
    <property type="match status" value="1"/>
</dbReference>
<dbReference type="Pfam" id="PF01702">
    <property type="entry name" value="TGT"/>
    <property type="match status" value="1"/>
</dbReference>
<dbReference type="SUPFAM" id="SSF51713">
    <property type="entry name" value="tRNA-guanine transglycosylase"/>
    <property type="match status" value="1"/>
</dbReference>
<accession>Q8DEY0</accession>
<name>TGT_VIBVU</name>
<gene>
    <name evidence="1" type="primary">tgt</name>
    <name type="ordered locus">VV1_0445</name>
</gene>
<feature type="chain" id="PRO_0000135553" description="Queuine tRNA-ribosyltransferase">
    <location>
        <begin position="1"/>
        <end position="378"/>
    </location>
</feature>
<feature type="region of interest" description="RNA binding" evidence="1">
    <location>
        <begin position="247"/>
        <end position="253"/>
    </location>
</feature>
<feature type="region of interest" description="RNA binding; important for wobble base 34 recognition" evidence="1">
    <location>
        <begin position="271"/>
        <end position="275"/>
    </location>
</feature>
<feature type="active site" description="Proton acceptor" evidence="1">
    <location>
        <position position="91"/>
    </location>
</feature>
<feature type="active site" description="Nucleophile" evidence="1">
    <location>
        <position position="266"/>
    </location>
</feature>
<feature type="binding site" evidence="1">
    <location>
        <begin position="91"/>
        <end position="95"/>
    </location>
    <ligand>
        <name>substrate</name>
    </ligand>
</feature>
<feature type="binding site" evidence="1">
    <location>
        <position position="145"/>
    </location>
    <ligand>
        <name>substrate</name>
    </ligand>
</feature>
<feature type="binding site" evidence="1">
    <location>
        <position position="189"/>
    </location>
    <ligand>
        <name>substrate</name>
    </ligand>
</feature>
<feature type="binding site" evidence="1">
    <location>
        <position position="216"/>
    </location>
    <ligand>
        <name>substrate</name>
    </ligand>
</feature>
<feature type="binding site" evidence="1">
    <location>
        <position position="304"/>
    </location>
    <ligand>
        <name>Zn(2+)</name>
        <dbReference type="ChEBI" id="CHEBI:29105"/>
    </ligand>
</feature>
<feature type="binding site" evidence="1">
    <location>
        <position position="306"/>
    </location>
    <ligand>
        <name>Zn(2+)</name>
        <dbReference type="ChEBI" id="CHEBI:29105"/>
    </ligand>
</feature>
<feature type="binding site" evidence="1">
    <location>
        <position position="309"/>
    </location>
    <ligand>
        <name>Zn(2+)</name>
        <dbReference type="ChEBI" id="CHEBI:29105"/>
    </ligand>
</feature>
<feature type="binding site" evidence="1">
    <location>
        <position position="335"/>
    </location>
    <ligand>
        <name>Zn(2+)</name>
        <dbReference type="ChEBI" id="CHEBI:29105"/>
    </ligand>
</feature>
<keyword id="KW-0328">Glycosyltransferase</keyword>
<keyword id="KW-0479">Metal-binding</keyword>
<keyword id="KW-0671">Queuosine biosynthesis</keyword>
<keyword id="KW-0808">Transferase</keyword>
<keyword id="KW-0819">tRNA processing</keyword>
<keyword id="KW-0862">Zinc</keyword>
<organism>
    <name type="scientific">Vibrio vulnificus (strain CMCP6)</name>
    <dbReference type="NCBI Taxonomy" id="216895"/>
    <lineage>
        <taxon>Bacteria</taxon>
        <taxon>Pseudomonadati</taxon>
        <taxon>Pseudomonadota</taxon>
        <taxon>Gammaproteobacteria</taxon>
        <taxon>Vibrionales</taxon>
        <taxon>Vibrionaceae</taxon>
        <taxon>Vibrio</taxon>
    </lineage>
</organism>
<evidence type="ECO:0000255" key="1">
    <source>
        <dbReference type="HAMAP-Rule" id="MF_00168"/>
    </source>
</evidence>
<evidence type="ECO:0000305" key="2"/>
<comment type="function">
    <text evidence="1">Catalyzes the base-exchange of a guanine (G) residue with the queuine precursor 7-aminomethyl-7-deazaguanine (PreQ1) at position 34 (anticodon wobble position) in tRNAs with GU(N) anticodons (tRNA-Asp, -Asn, -His and -Tyr). Catalysis occurs through a double-displacement mechanism. The nucleophile active site attacks the C1' of nucleotide 34 to detach the guanine base from the RNA, forming a covalent enzyme-RNA intermediate. The proton acceptor active site deprotonates the incoming PreQ1, allowing a nucleophilic attack on the C1' of the ribose to form the product. After dissociation, two additional enzymatic reactions on the tRNA convert PreQ1 to queuine (Q), resulting in the hypermodified nucleoside queuosine (7-(((4,5-cis-dihydroxy-2-cyclopenten-1-yl)amino)methyl)-7-deazaguanosine).</text>
</comment>
<comment type="catalytic activity">
    <reaction evidence="1">
        <text>7-aminomethyl-7-carbaguanine + guanosine(34) in tRNA = 7-aminomethyl-7-carbaguanosine(34) in tRNA + guanine</text>
        <dbReference type="Rhea" id="RHEA:24104"/>
        <dbReference type="Rhea" id="RHEA-COMP:10341"/>
        <dbReference type="Rhea" id="RHEA-COMP:10342"/>
        <dbReference type="ChEBI" id="CHEBI:16235"/>
        <dbReference type="ChEBI" id="CHEBI:58703"/>
        <dbReference type="ChEBI" id="CHEBI:74269"/>
        <dbReference type="ChEBI" id="CHEBI:82833"/>
        <dbReference type="EC" id="2.4.2.29"/>
    </reaction>
</comment>
<comment type="cofactor">
    <cofactor evidence="1">
        <name>Zn(2+)</name>
        <dbReference type="ChEBI" id="CHEBI:29105"/>
    </cofactor>
    <text evidence="1">Binds 1 zinc ion per subunit.</text>
</comment>
<comment type="pathway">
    <text evidence="1">tRNA modification; tRNA-queuosine biosynthesis.</text>
</comment>
<comment type="subunit">
    <text evidence="1">Homodimer. Within each dimer, one monomer is responsible for RNA recognition and catalysis, while the other monomer binds to the replacement base PreQ1.</text>
</comment>
<comment type="similarity">
    <text evidence="1">Belongs to the queuine tRNA-ribosyltransferase family.</text>
</comment>
<comment type="sequence caution" evidence="2">
    <conflict type="erroneous initiation">
        <sequence resource="EMBL-CDS" id="AAO08968"/>
    </conflict>
</comment>
<proteinExistence type="inferred from homology"/>